<dbReference type="EMBL" id="BX248583">
    <property type="protein sequence ID" value="CAD83717.1"/>
    <property type="molecule type" value="Genomic_DNA"/>
</dbReference>
<dbReference type="SMR" id="Q7VQD7"/>
<dbReference type="STRING" id="203907.Bfl202"/>
<dbReference type="KEGG" id="bfl:Bfl202"/>
<dbReference type="eggNOG" id="COG0198">
    <property type="taxonomic scope" value="Bacteria"/>
</dbReference>
<dbReference type="HOGENOM" id="CLU_093315_2_2_6"/>
<dbReference type="OrthoDB" id="9807419at2"/>
<dbReference type="Proteomes" id="UP000002192">
    <property type="component" value="Chromosome"/>
</dbReference>
<dbReference type="GO" id="GO:0005829">
    <property type="term" value="C:cytosol"/>
    <property type="evidence" value="ECO:0007669"/>
    <property type="project" value="UniProtKB-ARBA"/>
</dbReference>
<dbReference type="GO" id="GO:1990904">
    <property type="term" value="C:ribonucleoprotein complex"/>
    <property type="evidence" value="ECO:0007669"/>
    <property type="project" value="UniProtKB-KW"/>
</dbReference>
<dbReference type="GO" id="GO:0005840">
    <property type="term" value="C:ribosome"/>
    <property type="evidence" value="ECO:0007669"/>
    <property type="project" value="UniProtKB-KW"/>
</dbReference>
<dbReference type="GO" id="GO:0019843">
    <property type="term" value="F:rRNA binding"/>
    <property type="evidence" value="ECO:0007669"/>
    <property type="project" value="UniProtKB-UniRule"/>
</dbReference>
<dbReference type="GO" id="GO:0003735">
    <property type="term" value="F:structural constituent of ribosome"/>
    <property type="evidence" value="ECO:0007669"/>
    <property type="project" value="InterPro"/>
</dbReference>
<dbReference type="GO" id="GO:0006412">
    <property type="term" value="P:translation"/>
    <property type="evidence" value="ECO:0007669"/>
    <property type="project" value="UniProtKB-UniRule"/>
</dbReference>
<dbReference type="CDD" id="cd06089">
    <property type="entry name" value="KOW_RPL26"/>
    <property type="match status" value="1"/>
</dbReference>
<dbReference type="FunFam" id="2.30.30.30:FF:000004">
    <property type="entry name" value="50S ribosomal protein L24"/>
    <property type="match status" value="1"/>
</dbReference>
<dbReference type="Gene3D" id="2.30.30.30">
    <property type="match status" value="1"/>
</dbReference>
<dbReference type="HAMAP" id="MF_01326_B">
    <property type="entry name" value="Ribosomal_uL24_B"/>
    <property type="match status" value="1"/>
</dbReference>
<dbReference type="InterPro" id="IPR014722">
    <property type="entry name" value="Rib_uL2_dom2"/>
</dbReference>
<dbReference type="InterPro" id="IPR003256">
    <property type="entry name" value="Ribosomal_uL24"/>
</dbReference>
<dbReference type="InterPro" id="IPR041988">
    <property type="entry name" value="Ribosomal_uL24_KOW"/>
</dbReference>
<dbReference type="InterPro" id="IPR008991">
    <property type="entry name" value="Translation_prot_SH3-like_sf"/>
</dbReference>
<dbReference type="NCBIfam" id="TIGR01079">
    <property type="entry name" value="rplX_bact"/>
    <property type="match status" value="1"/>
</dbReference>
<dbReference type="PANTHER" id="PTHR12903">
    <property type="entry name" value="MITOCHONDRIAL RIBOSOMAL PROTEIN L24"/>
    <property type="match status" value="1"/>
</dbReference>
<dbReference type="Pfam" id="PF17136">
    <property type="entry name" value="ribosomal_L24"/>
    <property type="match status" value="1"/>
</dbReference>
<dbReference type="SUPFAM" id="SSF50104">
    <property type="entry name" value="Translation proteins SH3-like domain"/>
    <property type="match status" value="1"/>
</dbReference>
<name>RL24_BLOFL</name>
<feature type="chain" id="PRO_0000130638" description="Large ribosomal subunit protein uL24">
    <location>
        <begin position="1"/>
        <end position="106"/>
    </location>
</feature>
<gene>
    <name evidence="1" type="primary">rplX</name>
    <name type="ordered locus">Bfl202</name>
</gene>
<keyword id="KW-1185">Reference proteome</keyword>
<keyword id="KW-0687">Ribonucleoprotein</keyword>
<keyword id="KW-0689">Ribosomal protein</keyword>
<keyword id="KW-0694">RNA-binding</keyword>
<keyword id="KW-0699">rRNA-binding</keyword>
<proteinExistence type="inferred from homology"/>
<reference key="1">
    <citation type="journal article" date="2003" name="Proc. Natl. Acad. Sci. U.S.A.">
        <title>The genome sequence of Blochmannia floridanus: comparative analysis of reduced genomes.</title>
        <authorList>
            <person name="Gil R."/>
            <person name="Silva F.J."/>
            <person name="Zientz E."/>
            <person name="Delmotte F."/>
            <person name="Gonzalez-Candelas F."/>
            <person name="Latorre A."/>
            <person name="Rausell C."/>
            <person name="Kamerbeek J."/>
            <person name="Gadau J."/>
            <person name="Hoelldobler B."/>
            <person name="van Ham R.C.H.J."/>
            <person name="Gross R."/>
            <person name="Moya A."/>
        </authorList>
    </citation>
    <scope>NUCLEOTIDE SEQUENCE [LARGE SCALE GENOMIC DNA]</scope>
</reference>
<accession>Q7VQD7</accession>
<comment type="function">
    <text evidence="1">One of two assembly initiator proteins, it binds directly to the 5'-end of the 23S rRNA, where it nucleates assembly of the 50S subunit.</text>
</comment>
<comment type="function">
    <text evidence="1">One of the proteins that surrounds the polypeptide exit tunnel on the outside of the subunit.</text>
</comment>
<comment type="subunit">
    <text evidence="1">Part of the 50S ribosomal subunit.</text>
</comment>
<comment type="similarity">
    <text evidence="1">Belongs to the universal ribosomal protein uL24 family.</text>
</comment>
<sequence>MSANKIRCHDEVVVLTGKDKGKIGRVKFLCLSKKTVIVSGINVVKKHQKPVPNKNQPGGIIEKEAFIHLSNVAIFNAALNKADRVGFKIKNGKKIRIFKSNGNLIK</sequence>
<evidence type="ECO:0000255" key="1">
    <source>
        <dbReference type="HAMAP-Rule" id="MF_01326"/>
    </source>
</evidence>
<evidence type="ECO:0000305" key="2"/>
<protein>
    <recommendedName>
        <fullName evidence="1">Large ribosomal subunit protein uL24</fullName>
    </recommendedName>
    <alternativeName>
        <fullName evidence="2">50S ribosomal protein L24</fullName>
    </alternativeName>
</protein>
<organism>
    <name type="scientific">Blochmanniella floridana</name>
    <dbReference type="NCBI Taxonomy" id="203907"/>
    <lineage>
        <taxon>Bacteria</taxon>
        <taxon>Pseudomonadati</taxon>
        <taxon>Pseudomonadota</taxon>
        <taxon>Gammaproteobacteria</taxon>
        <taxon>Enterobacterales</taxon>
        <taxon>Enterobacteriaceae</taxon>
        <taxon>ant endosymbionts</taxon>
        <taxon>Candidatus Blochmanniella</taxon>
    </lineage>
</organism>